<dbReference type="EC" id="6.1.1.23" evidence="1"/>
<dbReference type="EMBL" id="CP000089">
    <property type="protein sequence ID" value="AAZ45391.1"/>
    <property type="molecule type" value="Genomic_DNA"/>
</dbReference>
<dbReference type="SMR" id="Q47IE0"/>
<dbReference type="STRING" id="159087.Daro_0634"/>
<dbReference type="KEGG" id="dar:Daro_0634"/>
<dbReference type="eggNOG" id="COG0173">
    <property type="taxonomic scope" value="Bacteria"/>
</dbReference>
<dbReference type="HOGENOM" id="CLU_014330_3_2_4"/>
<dbReference type="OrthoDB" id="9802326at2"/>
<dbReference type="GO" id="GO:0005737">
    <property type="term" value="C:cytoplasm"/>
    <property type="evidence" value="ECO:0007669"/>
    <property type="project" value="UniProtKB-SubCell"/>
</dbReference>
<dbReference type="GO" id="GO:0004815">
    <property type="term" value="F:aspartate-tRNA ligase activity"/>
    <property type="evidence" value="ECO:0007669"/>
    <property type="project" value="UniProtKB-UniRule"/>
</dbReference>
<dbReference type="GO" id="GO:0050560">
    <property type="term" value="F:aspartate-tRNA(Asn) ligase activity"/>
    <property type="evidence" value="ECO:0007669"/>
    <property type="project" value="UniProtKB-EC"/>
</dbReference>
<dbReference type="GO" id="GO:0005524">
    <property type="term" value="F:ATP binding"/>
    <property type="evidence" value="ECO:0007669"/>
    <property type="project" value="UniProtKB-UniRule"/>
</dbReference>
<dbReference type="GO" id="GO:0003676">
    <property type="term" value="F:nucleic acid binding"/>
    <property type="evidence" value="ECO:0007669"/>
    <property type="project" value="InterPro"/>
</dbReference>
<dbReference type="GO" id="GO:0006422">
    <property type="term" value="P:aspartyl-tRNA aminoacylation"/>
    <property type="evidence" value="ECO:0007669"/>
    <property type="project" value="UniProtKB-UniRule"/>
</dbReference>
<dbReference type="CDD" id="cd00777">
    <property type="entry name" value="AspRS_core"/>
    <property type="match status" value="1"/>
</dbReference>
<dbReference type="CDD" id="cd04317">
    <property type="entry name" value="EcAspRS_like_N"/>
    <property type="match status" value="1"/>
</dbReference>
<dbReference type="Gene3D" id="3.30.930.10">
    <property type="entry name" value="Bira Bifunctional Protein, Domain 2"/>
    <property type="match status" value="1"/>
</dbReference>
<dbReference type="Gene3D" id="3.30.1360.30">
    <property type="entry name" value="GAD-like domain"/>
    <property type="match status" value="1"/>
</dbReference>
<dbReference type="Gene3D" id="2.40.50.140">
    <property type="entry name" value="Nucleic acid-binding proteins"/>
    <property type="match status" value="1"/>
</dbReference>
<dbReference type="HAMAP" id="MF_00044">
    <property type="entry name" value="Asp_tRNA_synth_type1"/>
    <property type="match status" value="1"/>
</dbReference>
<dbReference type="InterPro" id="IPR004364">
    <property type="entry name" value="Aa-tRNA-synt_II"/>
</dbReference>
<dbReference type="InterPro" id="IPR006195">
    <property type="entry name" value="aa-tRNA-synth_II"/>
</dbReference>
<dbReference type="InterPro" id="IPR045864">
    <property type="entry name" value="aa-tRNA-synth_II/BPL/LPL"/>
</dbReference>
<dbReference type="InterPro" id="IPR004524">
    <property type="entry name" value="Asp-tRNA-ligase_1"/>
</dbReference>
<dbReference type="InterPro" id="IPR047089">
    <property type="entry name" value="Asp-tRNA-ligase_1_N"/>
</dbReference>
<dbReference type="InterPro" id="IPR002312">
    <property type="entry name" value="Asp/Asn-tRNA-synth_IIb"/>
</dbReference>
<dbReference type="InterPro" id="IPR047090">
    <property type="entry name" value="AspRS_core"/>
</dbReference>
<dbReference type="InterPro" id="IPR004115">
    <property type="entry name" value="GAD-like_sf"/>
</dbReference>
<dbReference type="InterPro" id="IPR029351">
    <property type="entry name" value="GAD_dom"/>
</dbReference>
<dbReference type="InterPro" id="IPR012340">
    <property type="entry name" value="NA-bd_OB-fold"/>
</dbReference>
<dbReference type="InterPro" id="IPR004365">
    <property type="entry name" value="NA-bd_OB_tRNA"/>
</dbReference>
<dbReference type="NCBIfam" id="TIGR00459">
    <property type="entry name" value="aspS_bact"/>
    <property type="match status" value="1"/>
</dbReference>
<dbReference type="NCBIfam" id="NF001750">
    <property type="entry name" value="PRK00476.1"/>
    <property type="match status" value="1"/>
</dbReference>
<dbReference type="PANTHER" id="PTHR22594:SF5">
    <property type="entry name" value="ASPARTATE--TRNA LIGASE, MITOCHONDRIAL"/>
    <property type="match status" value="1"/>
</dbReference>
<dbReference type="PANTHER" id="PTHR22594">
    <property type="entry name" value="ASPARTYL/LYSYL-TRNA SYNTHETASE"/>
    <property type="match status" value="1"/>
</dbReference>
<dbReference type="Pfam" id="PF02938">
    <property type="entry name" value="GAD"/>
    <property type="match status" value="1"/>
</dbReference>
<dbReference type="Pfam" id="PF00152">
    <property type="entry name" value="tRNA-synt_2"/>
    <property type="match status" value="1"/>
</dbReference>
<dbReference type="Pfam" id="PF01336">
    <property type="entry name" value="tRNA_anti-codon"/>
    <property type="match status" value="1"/>
</dbReference>
<dbReference type="PRINTS" id="PR01042">
    <property type="entry name" value="TRNASYNTHASP"/>
</dbReference>
<dbReference type="SUPFAM" id="SSF55681">
    <property type="entry name" value="Class II aaRS and biotin synthetases"/>
    <property type="match status" value="1"/>
</dbReference>
<dbReference type="SUPFAM" id="SSF55261">
    <property type="entry name" value="GAD domain-like"/>
    <property type="match status" value="1"/>
</dbReference>
<dbReference type="SUPFAM" id="SSF50249">
    <property type="entry name" value="Nucleic acid-binding proteins"/>
    <property type="match status" value="1"/>
</dbReference>
<dbReference type="PROSITE" id="PS50862">
    <property type="entry name" value="AA_TRNA_LIGASE_II"/>
    <property type="match status" value="1"/>
</dbReference>
<accession>Q47IE0</accession>
<reference key="1">
    <citation type="journal article" date="2009" name="BMC Genomics">
        <title>Metabolic analysis of the soil microbe Dechloromonas aromatica str. RCB: indications of a surprisingly complex life-style and cryptic anaerobic pathways for aromatic degradation.</title>
        <authorList>
            <person name="Salinero K.K."/>
            <person name="Keller K."/>
            <person name="Feil W.S."/>
            <person name="Feil H."/>
            <person name="Trong S."/>
            <person name="Di Bartolo G."/>
            <person name="Lapidus A."/>
        </authorList>
    </citation>
    <scope>NUCLEOTIDE SEQUENCE [LARGE SCALE GENOMIC DNA]</scope>
    <source>
        <strain>RCB</strain>
    </source>
</reference>
<feature type="chain" id="PRO_0000235522" description="Aspartate--tRNA(Asp/Asn) ligase">
    <location>
        <begin position="1"/>
        <end position="599"/>
    </location>
</feature>
<feature type="region of interest" description="Aspartate" evidence="1">
    <location>
        <begin position="196"/>
        <end position="199"/>
    </location>
</feature>
<feature type="binding site" evidence="1">
    <location>
        <position position="172"/>
    </location>
    <ligand>
        <name>L-aspartate</name>
        <dbReference type="ChEBI" id="CHEBI:29991"/>
    </ligand>
</feature>
<feature type="binding site" evidence="1">
    <location>
        <begin position="218"/>
        <end position="220"/>
    </location>
    <ligand>
        <name>ATP</name>
        <dbReference type="ChEBI" id="CHEBI:30616"/>
    </ligand>
</feature>
<feature type="binding site" evidence="1">
    <location>
        <position position="218"/>
    </location>
    <ligand>
        <name>L-aspartate</name>
        <dbReference type="ChEBI" id="CHEBI:29991"/>
    </ligand>
</feature>
<feature type="binding site" evidence="1">
    <location>
        <position position="227"/>
    </location>
    <ligand>
        <name>ATP</name>
        <dbReference type="ChEBI" id="CHEBI:30616"/>
    </ligand>
</feature>
<feature type="binding site" evidence="1">
    <location>
        <position position="451"/>
    </location>
    <ligand>
        <name>L-aspartate</name>
        <dbReference type="ChEBI" id="CHEBI:29991"/>
    </ligand>
</feature>
<feature type="binding site" evidence="1">
    <location>
        <position position="485"/>
    </location>
    <ligand>
        <name>ATP</name>
        <dbReference type="ChEBI" id="CHEBI:30616"/>
    </ligand>
</feature>
<feature type="binding site" evidence="1">
    <location>
        <position position="492"/>
    </location>
    <ligand>
        <name>L-aspartate</name>
        <dbReference type="ChEBI" id="CHEBI:29991"/>
    </ligand>
</feature>
<feature type="binding site" evidence="1">
    <location>
        <begin position="537"/>
        <end position="540"/>
    </location>
    <ligand>
        <name>ATP</name>
        <dbReference type="ChEBI" id="CHEBI:30616"/>
    </ligand>
</feature>
<feature type="site" description="Important for tRNA non-discrimination" evidence="1">
    <location>
        <position position="30"/>
    </location>
</feature>
<feature type="site" description="Important for tRNA non-discrimination" evidence="1">
    <location>
        <position position="81"/>
    </location>
</feature>
<name>SYDND_DECAR</name>
<protein>
    <recommendedName>
        <fullName evidence="1">Aspartate--tRNA(Asp/Asn) ligase</fullName>
        <ecNumber evidence="1">6.1.1.23</ecNumber>
    </recommendedName>
    <alternativeName>
        <fullName evidence="1">Aspartyl-tRNA synthetase</fullName>
        <shortName evidence="1">AspRS</shortName>
    </alternativeName>
    <alternativeName>
        <fullName evidence="1">Non-discriminating aspartyl-tRNA synthetase</fullName>
        <shortName evidence="1">ND-AspRS</shortName>
    </alternativeName>
</protein>
<keyword id="KW-0030">Aminoacyl-tRNA synthetase</keyword>
<keyword id="KW-0067">ATP-binding</keyword>
<keyword id="KW-0963">Cytoplasm</keyword>
<keyword id="KW-0436">Ligase</keyword>
<keyword id="KW-0547">Nucleotide-binding</keyword>
<keyword id="KW-0648">Protein biosynthesis</keyword>
<evidence type="ECO:0000255" key="1">
    <source>
        <dbReference type="HAMAP-Rule" id="MF_00044"/>
    </source>
</evidence>
<sequence length="599" mass="66956">MRTHYCGQLNAALDGQIVTLCGWAHRRRDHGGVIFIDLRDREGLAQVVCDPDRADTFKIAESVRNEFCLKITGKVRPRPAGTTNANLASGEIEILCHEIEVLNPSVTPPFQLDEDNLSENVRLLHRVIDLRRPQMQNNLMLRYKTSRAFRRFLDDNGFIDIETPMLTKSTPEGARDYLVPSRVHPGQFFALPQSPQLFKQLLMVAGYDRYYQIVKCFRDEDLRADRQPEFTQVDIETSFMSEAEIMALTEKLIRTVFKEAIDVDLPDFPRMTYAEAMHRFGSDKPDLRVTLELTEVTDAFKDVAFKVFAGVANSEGGRIAAMRIPGGATLTRGEIDAYTQFVGIYGAKGLAYIKVNDASQINETGLQSPIVKNLSEASLKAVIERTGAQSGDLIFFGADKAKIVNDALGALRIKIGHEKGFVTGAKWAPLWVIDFPMFEYDDESKRWTACHHPFTSPKDEHLDLLVSDPGKCLAKAYDLALNGWELGGGSVRIHRSDVQEKVFSALNIGPEEQQAKFGFLLDALKYGAPPHGGLAFGLDRIVTMMTGAESIRDVIAFPKTQRAQCLLTDAPSGVDEKQLRELHIRLRQKVETQVEVGQP</sequence>
<proteinExistence type="inferred from homology"/>
<comment type="function">
    <text evidence="1">Aspartyl-tRNA synthetase with relaxed tRNA specificity since it is able to aspartylate not only its cognate tRNA(Asp) but also tRNA(Asn). Reaction proceeds in two steps: L-aspartate is first activated by ATP to form Asp-AMP and then transferred to the acceptor end of tRNA(Asp/Asn).</text>
</comment>
<comment type="catalytic activity">
    <reaction evidence="1">
        <text>tRNA(Asx) + L-aspartate + ATP = L-aspartyl-tRNA(Asx) + AMP + diphosphate</text>
        <dbReference type="Rhea" id="RHEA:18349"/>
        <dbReference type="Rhea" id="RHEA-COMP:9710"/>
        <dbReference type="Rhea" id="RHEA-COMP:9711"/>
        <dbReference type="ChEBI" id="CHEBI:29991"/>
        <dbReference type="ChEBI" id="CHEBI:30616"/>
        <dbReference type="ChEBI" id="CHEBI:33019"/>
        <dbReference type="ChEBI" id="CHEBI:78442"/>
        <dbReference type="ChEBI" id="CHEBI:78516"/>
        <dbReference type="ChEBI" id="CHEBI:456215"/>
        <dbReference type="EC" id="6.1.1.23"/>
    </reaction>
</comment>
<comment type="subunit">
    <text evidence="1">Homodimer.</text>
</comment>
<comment type="subcellular location">
    <subcellularLocation>
        <location evidence="1">Cytoplasm</location>
    </subcellularLocation>
</comment>
<comment type="similarity">
    <text evidence="1">Belongs to the class-II aminoacyl-tRNA synthetase family. Type 1 subfamily.</text>
</comment>
<gene>
    <name evidence="1" type="primary">aspS</name>
    <name type="ordered locus">Daro_0634</name>
</gene>
<organism>
    <name type="scientific">Dechloromonas aromatica (strain RCB)</name>
    <dbReference type="NCBI Taxonomy" id="159087"/>
    <lineage>
        <taxon>Bacteria</taxon>
        <taxon>Pseudomonadati</taxon>
        <taxon>Pseudomonadota</taxon>
        <taxon>Betaproteobacteria</taxon>
        <taxon>Rhodocyclales</taxon>
        <taxon>Azonexaceae</taxon>
        <taxon>Dechloromonas</taxon>
    </lineage>
</organism>